<evidence type="ECO:0000250" key="1">
    <source>
        <dbReference type="UniProtKB" id="O43761"/>
    </source>
</evidence>
<evidence type="ECO:0000250" key="2">
    <source>
        <dbReference type="UniProtKB" id="Q8R191"/>
    </source>
</evidence>
<evidence type="ECO:0000255" key="3"/>
<evidence type="ECO:0000255" key="4">
    <source>
        <dbReference type="PROSITE-ProRule" id="PRU00581"/>
    </source>
</evidence>
<evidence type="ECO:0000305" key="5"/>
<proteinExistence type="evidence at transcript level"/>
<sequence>MEGGSFGAGRAGAALDPVSFARRPQTLLRVASWVFSIAVFGPIVNEGYVNADSGPELRCVFNGNAGACRFGVALGLGAFLACSCFLLLDVRFQQISSVRDRRRAVLLDLGFSGLWSFLWFVGFCFLTNQWQRTAPGPGTAQAGDAARAVITFSFFSILSWVALTVKALQRFRLGTDMSLFATEQLGAGAGQTYPGYPVGSGVEGTDTYQSPPFTETLDTSPKGYQVPAY</sequence>
<keyword id="KW-0007">Acetylation</keyword>
<keyword id="KW-0968">Cytoplasmic vesicle</keyword>
<keyword id="KW-0472">Membrane</keyword>
<keyword id="KW-1185">Reference proteome</keyword>
<keyword id="KW-0770">Synapse</keyword>
<keyword id="KW-0812">Transmembrane</keyword>
<keyword id="KW-1133">Transmembrane helix</keyword>
<comment type="function">
    <text evidence="2">May play a role in regulated exocytosis. May indirectly regulate the activity of the plasma membrane dopamine transporter SLC6A3 and thereby regulate dopamine transport back from the synaptic cleft into the presynaptic terminal.</text>
</comment>
<comment type="subunit">
    <text evidence="2">Interacts (via N-terminus) with SLC6A3 (via N-terminus). May interact with VMAT2.</text>
</comment>
<comment type="subcellular location">
    <subcellularLocation>
        <location evidence="2">Cytoplasmic vesicle</location>
        <location evidence="2">Secretory vesicle</location>
        <location evidence="2">Synaptic vesicle membrane</location>
        <topology evidence="3">Multi-pass membrane protein</topology>
    </subcellularLocation>
    <subcellularLocation>
        <location evidence="2">Synapse</location>
    </subcellularLocation>
    <text evidence="2">Found at the neuromuscular synapses.</text>
</comment>
<comment type="similarity">
    <text evidence="5">Belongs to the synaptogyrin family.</text>
</comment>
<protein>
    <recommendedName>
        <fullName evidence="5">Synaptogyrin-3</fullName>
    </recommendedName>
</protein>
<reference key="1">
    <citation type="submission" date="2007-02" db="EMBL/GenBank/DDBJ databases">
        <authorList>
            <consortium name="NIH - Mammalian Gene Collection (MGC) project"/>
        </authorList>
    </citation>
    <scope>NUCLEOTIDE SEQUENCE [LARGE SCALE MRNA]</scope>
    <source>
        <strain>Hereford</strain>
        <tissue>Fetal pons</tissue>
    </source>
</reference>
<organism>
    <name type="scientific">Bos taurus</name>
    <name type="common">Bovine</name>
    <dbReference type="NCBI Taxonomy" id="9913"/>
    <lineage>
        <taxon>Eukaryota</taxon>
        <taxon>Metazoa</taxon>
        <taxon>Chordata</taxon>
        <taxon>Craniata</taxon>
        <taxon>Vertebrata</taxon>
        <taxon>Euteleostomi</taxon>
        <taxon>Mammalia</taxon>
        <taxon>Eutheria</taxon>
        <taxon>Laurasiatheria</taxon>
        <taxon>Artiodactyla</taxon>
        <taxon>Ruminantia</taxon>
        <taxon>Pecora</taxon>
        <taxon>Bovidae</taxon>
        <taxon>Bovinae</taxon>
        <taxon>Bos</taxon>
    </lineage>
</organism>
<feature type="chain" id="PRO_0000343948" description="Synaptogyrin-3">
    <location>
        <begin position="1"/>
        <end position="229"/>
    </location>
</feature>
<feature type="transmembrane region" description="Helical" evidence="3">
    <location>
        <begin position="30"/>
        <end position="50"/>
    </location>
</feature>
<feature type="transmembrane region" description="Helical" evidence="3">
    <location>
        <begin position="70"/>
        <end position="90"/>
    </location>
</feature>
<feature type="transmembrane region" description="Helical" evidence="3">
    <location>
        <begin position="105"/>
        <end position="125"/>
    </location>
</feature>
<feature type="transmembrane region" description="Helical" evidence="3">
    <location>
        <begin position="148"/>
        <end position="168"/>
    </location>
</feature>
<feature type="domain" description="MARVEL" evidence="4">
    <location>
        <begin position="20"/>
        <end position="172"/>
    </location>
</feature>
<feature type="modified residue" description="N-acetylmethionine" evidence="1">
    <location>
        <position position="1"/>
    </location>
</feature>
<gene>
    <name evidence="1" type="primary">SYNGR3</name>
</gene>
<accession>A2VE58</accession>
<dbReference type="EMBL" id="BC133586">
    <property type="protein sequence ID" value="AAI33587.1"/>
    <property type="molecule type" value="mRNA"/>
</dbReference>
<dbReference type="RefSeq" id="NP_001075933.1">
    <property type="nucleotide sequence ID" value="NM_001082464.1"/>
</dbReference>
<dbReference type="SMR" id="A2VE58"/>
<dbReference type="FunCoup" id="A2VE58">
    <property type="interactions" value="1410"/>
</dbReference>
<dbReference type="STRING" id="9913.ENSBTAP00000011211"/>
<dbReference type="PaxDb" id="9913-ENSBTAP00000011211"/>
<dbReference type="GeneID" id="618415"/>
<dbReference type="KEGG" id="bta:618415"/>
<dbReference type="CTD" id="9143"/>
<dbReference type="VEuPathDB" id="HostDB:ENSBTAG00000008504"/>
<dbReference type="eggNOG" id="KOG4016">
    <property type="taxonomic scope" value="Eukaryota"/>
</dbReference>
<dbReference type="HOGENOM" id="CLU_079186_0_1_1"/>
<dbReference type="InParanoid" id="A2VE58"/>
<dbReference type="OMA" id="RVTTWIF"/>
<dbReference type="OrthoDB" id="10041611at2759"/>
<dbReference type="TreeFam" id="TF320995"/>
<dbReference type="Proteomes" id="UP000009136">
    <property type="component" value="Chromosome 25"/>
</dbReference>
<dbReference type="Bgee" id="ENSBTAG00000008504">
    <property type="expression patterns" value="Expressed in Ammon's horn and 86 other cell types or tissues"/>
</dbReference>
<dbReference type="GO" id="GO:0031594">
    <property type="term" value="C:neuromuscular junction"/>
    <property type="evidence" value="ECO:0000318"/>
    <property type="project" value="GO_Central"/>
</dbReference>
<dbReference type="GO" id="GO:0008021">
    <property type="term" value="C:synaptic vesicle"/>
    <property type="evidence" value="ECO:0000250"/>
    <property type="project" value="UniProtKB"/>
</dbReference>
<dbReference type="GO" id="GO:0030672">
    <property type="term" value="C:synaptic vesicle membrane"/>
    <property type="evidence" value="ECO:0000318"/>
    <property type="project" value="GO_Central"/>
</dbReference>
<dbReference type="GO" id="GO:0032411">
    <property type="term" value="P:positive regulation of transporter activity"/>
    <property type="evidence" value="ECO:0000250"/>
    <property type="project" value="UniProtKB"/>
</dbReference>
<dbReference type="GO" id="GO:0045055">
    <property type="term" value="P:regulated exocytosis"/>
    <property type="evidence" value="ECO:0000250"/>
    <property type="project" value="UniProtKB"/>
</dbReference>
<dbReference type="InterPro" id="IPR008253">
    <property type="entry name" value="Marvel"/>
</dbReference>
<dbReference type="InterPro" id="IPR016579">
    <property type="entry name" value="Synaptogyrin"/>
</dbReference>
<dbReference type="PANTHER" id="PTHR10838">
    <property type="entry name" value="SYNAPTOGYRIN"/>
    <property type="match status" value="1"/>
</dbReference>
<dbReference type="PANTHER" id="PTHR10838:SF8">
    <property type="entry name" value="SYNAPTOGYRIN-3"/>
    <property type="match status" value="1"/>
</dbReference>
<dbReference type="Pfam" id="PF01284">
    <property type="entry name" value="MARVEL"/>
    <property type="match status" value="1"/>
</dbReference>
<dbReference type="PIRSF" id="PIRSF011282">
    <property type="entry name" value="Synaptogyrin"/>
    <property type="match status" value="1"/>
</dbReference>
<dbReference type="PROSITE" id="PS51225">
    <property type="entry name" value="MARVEL"/>
    <property type="match status" value="1"/>
</dbReference>
<name>SNG3_BOVIN</name>